<comment type="function">
    <text evidence="1">CRISPR (clustered regularly interspaced short palindromic repeat) is an adaptive immune system that provides protection against mobile genetic elements (viruses, transposable elements and conjugative plasmids). CRISPR clusters contain spacers, sequences complementary to antecedent mobile elements, and target invading nucleic acids. CRISPR clusters are transcribed and processed into CRISPR RNA (crRNA). The type III-A Csm effector complex binds crRNA and acts as a crRNA-guided RNase, DNase and cyclic oligoadenylate synthase; binding of target RNA cognate to the crRNA is required for all activities.</text>
</comment>
<comment type="function">
    <text evidence="2">This subunit is a single-strand-specific deoxyribonuclease (ssDNase) which digests both linear and circular ssDNA; it has both exo- and endonuclease activity.</text>
</comment>
<comment type="function">
    <text evidence="1">ssDNase activity is stimulated in the ternary Csm effector complex; binding of cognate target RNA activates the ssDNase, as the target RNA is degraded ssDNA activity decreases.</text>
</comment>
<comment type="function">
    <text evidence="1">When associated with the ternary Csm effector complex (the crRNA, Cas proteins and a cognate target ssRNA) synthesizes cyclic oligoadenylates (cOA) from ATP. cOAs are second messengers that stimulate the ssRNase activity of Csx1, inducing an antiviral state important for defense against invading nucleic acids.</text>
</comment>
<comment type="cofactor">
    <cofactor evidence="1">
        <name>a divalent metal cation</name>
        <dbReference type="ChEBI" id="CHEBI:60240"/>
    </cofactor>
</comment>
<comment type="subunit">
    <text evidence="1 5">Part of the Csm effector complex, that includes Cas10/Csm1, Csm2, Csm3, Csm4, Csm5 and mature crRNA (By similarity). Stable Cas10/Csm1-Csm4 and Cas10-Csm1-Csm3-Csm4 subcomplexes can be isolated; Cas10 and Csm3 probably do not directly interact (PubMed:25451598).</text>
</comment>
<comment type="domain">
    <text evidence="1">The N-terminal HD domain has ssDNase activity. The C-terminal GGDEF domain has the cOA synthesis activity.</text>
</comment>
<comment type="miscellaneous">
    <text evidence="7">Encoded in a type III-A CRISPR locus.</text>
</comment>
<comment type="similarity">
    <text evidence="7">Belongs to the CRISPR-associated Cas10/Csm1 family.</text>
</comment>
<evidence type="ECO:0000250" key="1">
    <source>
        <dbReference type="UniProtKB" id="A0A0A7HFE1"/>
    </source>
</evidence>
<evidence type="ECO:0000250" key="2">
    <source>
        <dbReference type="UniProtKB" id="B6YWB8"/>
    </source>
</evidence>
<evidence type="ECO:0000255" key="3">
    <source>
        <dbReference type="PROSITE-ProRule" id="PRU00095"/>
    </source>
</evidence>
<evidence type="ECO:0000255" key="4">
    <source>
        <dbReference type="PROSITE-ProRule" id="PRU01175"/>
    </source>
</evidence>
<evidence type="ECO:0000269" key="5">
    <source>
    </source>
</evidence>
<evidence type="ECO:0000303" key="6">
    <source>
    </source>
</evidence>
<evidence type="ECO:0000305" key="7"/>
<keyword id="KW-0051">Antiviral defense</keyword>
<keyword id="KW-0067">ATP-binding</keyword>
<keyword id="KW-0255">Endonuclease</keyword>
<keyword id="KW-0269">Exonuclease</keyword>
<keyword id="KW-0378">Hydrolase</keyword>
<keyword id="KW-0540">Nuclease</keyword>
<keyword id="KW-0547">Nucleotide-binding</keyword>
<keyword id="KW-1185">Reference proteome</keyword>
<keyword id="KW-0694">RNA-binding</keyword>
<keyword id="KW-0808">Transferase</keyword>
<organism>
    <name type="scientific">Methanocaldococcus jannaschii (strain ATCC 43067 / DSM 2661 / JAL-1 / JCM 10045 / NBRC 100440)</name>
    <name type="common">Methanococcus jannaschii</name>
    <dbReference type="NCBI Taxonomy" id="243232"/>
    <lineage>
        <taxon>Archaea</taxon>
        <taxon>Methanobacteriati</taxon>
        <taxon>Methanobacteriota</taxon>
        <taxon>Methanomada group</taxon>
        <taxon>Methanococci</taxon>
        <taxon>Methanococcales</taxon>
        <taxon>Methanocaldococcaceae</taxon>
        <taxon>Methanocaldococcus</taxon>
    </lineage>
</organism>
<accession>Q59066</accession>
<sequence>MGNCNEYTALKIGALLHDIGKFIQRASDKPKSKGHDKFGYEFLKEKFKNGFLNHLDEKTKDKILEIVKEHHNQKIKDDLIGIVRLADWLSSGERREPKGDPENVEVLNTEEQKLLSIFETVCIGELTENLYKNGFKYSLKPLNVSDAIFTDKPYPNENYKELFSKFEDEIKDFKGDVSFEELYQLMQKYTWCIPSVTMWKKAGSLKGGLPDVSLFDHSKTTCAIACCLYQMYVKENKKKNKYAKEYIDDKTLEKLFNNDNGWNKEIFSLIHGDLSGIQDFVFTITTKYATKSLKGRSFYLDFLTEYFAKYICKELNLPITNILFYGGGHFYILSYKVDENLINKLEKEINEVLFNMFRTKIYITIAEVGVTPNDFKKSEDKESKEKTWGFAKKWKEVSEKTVEKKLRRFEYKLEGLFEPYNRGSENRCVICRNEFDKNEKGYAIRENESKSERICDYCASFVALTDILKNFQMEKTIKFNKAYPIIHLTKNKDNLSLQREEFSFLTVKAIEKLESKFRVLSDENYFLKEYKLPHDSGELIIPYKIWAIAFPIIENETEKRILDFDGLAEKAFERTGTRKIGILKMDVDNLGEIFTTGLGNDATISRMSTLSSMLTLFFTGYIPHLIKNEEFEVNGKKYKFKDNIYLVYAGGDDTLIVGAWDAVWELAKRIRGDFKKFVCYNPYITLSAGIVFVNPKFEFKKAVNMAEEELENGKNYIIYEDEETEKKVDKNALTVFNCPMNWDLEVEYNEYCWTKLKSYLEGINKEMVELESLVKKFNEDDLEKNLKKQLKRQIRKESYI</sequence>
<name>CAS10_METJA</name>
<proteinExistence type="evidence at protein level"/>
<reference key="1">
    <citation type="journal article" date="1996" name="Science">
        <title>Complete genome sequence of the methanogenic archaeon, Methanococcus jannaschii.</title>
        <authorList>
            <person name="Bult C.J."/>
            <person name="White O."/>
            <person name="Olsen G.J."/>
            <person name="Zhou L."/>
            <person name="Fleischmann R.D."/>
            <person name="Sutton G.G."/>
            <person name="Blake J.A."/>
            <person name="FitzGerald L.M."/>
            <person name="Clayton R.A."/>
            <person name="Gocayne J.D."/>
            <person name="Kerlavage A.R."/>
            <person name="Dougherty B.A."/>
            <person name="Tomb J.-F."/>
            <person name="Adams M.D."/>
            <person name="Reich C.I."/>
            <person name="Overbeek R."/>
            <person name="Kirkness E.F."/>
            <person name="Weinstock K.G."/>
            <person name="Merrick J.M."/>
            <person name="Glodek A."/>
            <person name="Scott J.L."/>
            <person name="Geoghagen N.S.M."/>
            <person name="Weidman J.F."/>
            <person name="Fuhrmann J.L."/>
            <person name="Nguyen D."/>
            <person name="Utterback T.R."/>
            <person name="Kelley J.M."/>
            <person name="Peterson J.D."/>
            <person name="Sadow P.W."/>
            <person name="Hanna M.C."/>
            <person name="Cotton M.D."/>
            <person name="Roberts K.M."/>
            <person name="Hurst M.A."/>
            <person name="Kaine B.P."/>
            <person name="Borodovsky M."/>
            <person name="Klenk H.-P."/>
            <person name="Fraser C.M."/>
            <person name="Smith H.O."/>
            <person name="Woese C.R."/>
            <person name="Venter J.C."/>
        </authorList>
    </citation>
    <scope>NUCLEOTIDE SEQUENCE [LARGE SCALE GENOMIC DNA]</scope>
    <source>
        <strain>ATCC 43067 / DSM 2661 / JAL-1 / JCM 10045 / NBRC 100440</strain>
    </source>
</reference>
<reference key="2">
    <citation type="journal article" date="2015" name="J. Mol. Biol.">
        <title>Crystal structure of the Csm3-Csm4 subcomplex in the type III-A CRISPR-Cas interference complex.</title>
        <authorList>
            <person name="Numata T."/>
            <person name="Inanaga H."/>
            <person name="Sato C."/>
            <person name="Osawa T."/>
        </authorList>
    </citation>
    <scope>SUBUNIT</scope>
    <source>
        <strain>ATCC 43067 / DSM 2661 / JAL-1 / JCM 10045 / NBRC 100440</strain>
    </source>
</reference>
<gene>
    <name type="primary">cas10</name>
    <name evidence="6" type="synonym">csm1</name>
    <name type="ordered locus">MJ1672</name>
</gene>
<protein>
    <recommendedName>
        <fullName>CRISPR system single-strand-specific deoxyribonuclease Cas10/Csm1 (subtype III-A)</fullName>
        <shortName>ssDNase Cas10</shortName>
        <ecNumber>3.1.-.-</ecNumber>
    </recommendedName>
    <alternativeName>
        <fullName>Cyclic oligoadenylate synthase</fullName>
        <ecNumber evidence="1">2.7.7.-</ecNumber>
    </alternativeName>
</protein>
<feature type="chain" id="PRO_0000107470" description="CRISPR system single-strand-specific deoxyribonuclease Cas10/Csm1 (subtype III-A)">
    <location>
        <begin position="1"/>
        <end position="800"/>
    </location>
</feature>
<feature type="domain" description="HD" evidence="4">
    <location>
        <begin position="1"/>
        <end position="92"/>
    </location>
</feature>
<feature type="domain" description="GGDEF" evidence="3">
    <location>
        <begin position="578"/>
        <end position="722"/>
    </location>
</feature>
<dbReference type="EC" id="3.1.-.-"/>
<dbReference type="EC" id="2.7.7.-" evidence="1"/>
<dbReference type="EMBL" id="L77117">
    <property type="protein sequence ID" value="AAB99690.1"/>
    <property type="molecule type" value="Genomic_DNA"/>
</dbReference>
<dbReference type="PIR" id="F64508">
    <property type="entry name" value="F64508"/>
</dbReference>
<dbReference type="RefSeq" id="WP_010871196.1">
    <property type="nucleotide sequence ID" value="NC_000909.1"/>
</dbReference>
<dbReference type="SMR" id="Q59066"/>
<dbReference type="FunCoup" id="Q59066">
    <property type="interactions" value="3"/>
</dbReference>
<dbReference type="STRING" id="243232.MJ_1672"/>
<dbReference type="PaxDb" id="243232-MJ_1672"/>
<dbReference type="EnsemblBacteria" id="AAB99690">
    <property type="protein sequence ID" value="AAB99690"/>
    <property type="gene ID" value="MJ_1672"/>
</dbReference>
<dbReference type="GeneID" id="1452581"/>
<dbReference type="KEGG" id="mja:MJ_1672"/>
<dbReference type="eggNOG" id="arCOG02666">
    <property type="taxonomic scope" value="Archaea"/>
</dbReference>
<dbReference type="HOGENOM" id="CLU_017487_0_0_2"/>
<dbReference type="InParanoid" id="Q59066"/>
<dbReference type="OrthoDB" id="57429at2157"/>
<dbReference type="PhylomeDB" id="Q59066"/>
<dbReference type="Proteomes" id="UP000000805">
    <property type="component" value="Chromosome"/>
</dbReference>
<dbReference type="GO" id="GO:0005524">
    <property type="term" value="F:ATP binding"/>
    <property type="evidence" value="ECO:0007669"/>
    <property type="project" value="UniProtKB-KW"/>
</dbReference>
<dbReference type="GO" id="GO:0004519">
    <property type="term" value="F:endonuclease activity"/>
    <property type="evidence" value="ECO:0007669"/>
    <property type="project" value="UniProtKB-KW"/>
</dbReference>
<dbReference type="GO" id="GO:0004527">
    <property type="term" value="F:exonuclease activity"/>
    <property type="evidence" value="ECO:0007669"/>
    <property type="project" value="UniProtKB-KW"/>
</dbReference>
<dbReference type="GO" id="GO:0003723">
    <property type="term" value="F:RNA binding"/>
    <property type="evidence" value="ECO:0007669"/>
    <property type="project" value="UniProtKB-KW"/>
</dbReference>
<dbReference type="GO" id="GO:0016740">
    <property type="term" value="F:transferase activity"/>
    <property type="evidence" value="ECO:0007669"/>
    <property type="project" value="UniProtKB-KW"/>
</dbReference>
<dbReference type="GO" id="GO:0051607">
    <property type="term" value="P:defense response to virus"/>
    <property type="evidence" value="ECO:0007669"/>
    <property type="project" value="UniProtKB-KW"/>
</dbReference>
<dbReference type="CDD" id="cd09680">
    <property type="entry name" value="Cas10_III"/>
    <property type="match status" value="1"/>
</dbReference>
<dbReference type="Gene3D" id="3.30.70.270">
    <property type="match status" value="1"/>
</dbReference>
<dbReference type="Gene3D" id="1.10.3210.10">
    <property type="entry name" value="Hypothetical protein af1432"/>
    <property type="match status" value="1"/>
</dbReference>
<dbReference type="InterPro" id="IPR054767">
    <property type="entry name" value="Cas10-Cmr2_palm2"/>
</dbReference>
<dbReference type="InterPro" id="IPR013408">
    <property type="entry name" value="Cas10/Csm1"/>
</dbReference>
<dbReference type="InterPro" id="IPR052117">
    <property type="entry name" value="Cas10/Csm1_subtype-III-A"/>
</dbReference>
<dbReference type="InterPro" id="IPR041062">
    <property type="entry name" value="Csm1_B"/>
</dbReference>
<dbReference type="InterPro" id="IPR000160">
    <property type="entry name" value="GGDEF_dom"/>
</dbReference>
<dbReference type="InterPro" id="IPR006674">
    <property type="entry name" value="HD_domain"/>
</dbReference>
<dbReference type="InterPro" id="IPR043128">
    <property type="entry name" value="Rev_trsase/Diguanyl_cyclase"/>
</dbReference>
<dbReference type="NCBIfam" id="TIGR02578">
    <property type="entry name" value="cas_TM1811_Csm1"/>
    <property type="match status" value="1"/>
</dbReference>
<dbReference type="PANTHER" id="PTHR36528">
    <property type="entry name" value="CRISPR SYSTEM SINGLE-STRAND-SPECIFIC DEOXYRIBONUCLEASE CAS10/CSM1 (SUBTYPE III-A)"/>
    <property type="match status" value="1"/>
</dbReference>
<dbReference type="PANTHER" id="PTHR36528:SF1">
    <property type="entry name" value="CRISPR SYSTEM SINGLE-STRAND-SPECIFIC DEOXYRIBONUCLEASE CAS10_CSM1 (SUBTYPE III-A)"/>
    <property type="match status" value="1"/>
</dbReference>
<dbReference type="Pfam" id="PF22335">
    <property type="entry name" value="Cas10-Cmr2_palm2"/>
    <property type="match status" value="1"/>
</dbReference>
<dbReference type="Pfam" id="PF18211">
    <property type="entry name" value="Csm1_B"/>
    <property type="match status" value="1"/>
</dbReference>
<dbReference type="Pfam" id="PF01966">
    <property type="entry name" value="HD"/>
    <property type="match status" value="1"/>
</dbReference>
<dbReference type="SUPFAM" id="SSF109604">
    <property type="entry name" value="HD-domain/PDEase-like"/>
    <property type="match status" value="1"/>
</dbReference>
<dbReference type="PROSITE" id="PS50887">
    <property type="entry name" value="GGDEF"/>
    <property type="match status" value="1"/>
</dbReference>
<dbReference type="PROSITE" id="PS51831">
    <property type="entry name" value="HD"/>
    <property type="match status" value="1"/>
</dbReference>